<feature type="chain" id="PRO_0000325790" description="N(6)-adenosine-methyltransferase non-catalytic subunit METTL14">
    <location>
        <begin position="1"/>
        <end position="456"/>
    </location>
</feature>
<feature type="region of interest" description="Disordered" evidence="3">
    <location>
        <begin position="50"/>
        <end position="75"/>
    </location>
</feature>
<feature type="region of interest" description="Interaction with METTL3" evidence="9 18 19 20">
    <location>
        <begin position="135"/>
        <end position="136"/>
    </location>
</feature>
<feature type="region of interest" description="Interaction with METTL3" evidence="9 18 19 20">
    <location>
        <begin position="237"/>
        <end position="238"/>
    </location>
</feature>
<feature type="region of interest" description="Positively charged region required for RNA-binding" evidence="9">
    <location>
        <begin position="245"/>
        <end position="254"/>
    </location>
</feature>
<feature type="region of interest" description="Interaction with METTL3" evidence="9 18 19 20">
    <location>
        <begin position="255"/>
        <end position="258"/>
    </location>
</feature>
<feature type="region of interest" description="Interaction with METTL3" evidence="9 18 19 20">
    <location>
        <begin position="278"/>
        <end position="287"/>
    </location>
</feature>
<feature type="region of interest" description="Positively charged region required for RNA-binding" evidence="9">
    <location>
        <begin position="297"/>
        <end position="298"/>
    </location>
</feature>
<feature type="region of interest" description="Interaction with METTL3" evidence="9 18 19 20">
    <location>
        <begin position="308"/>
        <end position="312"/>
    </location>
</feature>
<feature type="region of interest" description="Disordered" evidence="3">
    <location>
        <begin position="393"/>
        <end position="456"/>
    </location>
</feature>
<feature type="compositionally biased region" description="Gly residues" evidence="3">
    <location>
        <begin position="409"/>
        <end position="423"/>
    </location>
</feature>
<feature type="compositionally biased region" description="Basic and acidic residues" evidence="3">
    <location>
        <begin position="425"/>
        <end position="440"/>
    </location>
</feature>
<feature type="compositionally biased region" description="Gly residues" evidence="3">
    <location>
        <begin position="441"/>
        <end position="450"/>
    </location>
</feature>
<feature type="site" description="Interaction with METTL3" evidence="9 18 19 20">
    <location>
        <position position="146"/>
    </location>
</feature>
<feature type="site" description="Interaction with METTL3" evidence="9 18 19 20">
    <location>
        <position position="242"/>
    </location>
</feature>
<feature type="site" description="Interaction with METTL3" evidence="9 18 19 20">
    <location>
        <position position="245"/>
    </location>
</feature>
<feature type="site" description="Interaction with METTL3" evidence="9 18 19 20">
    <location>
        <position position="298"/>
    </location>
</feature>
<feature type="site" description="Interaction with METTL3" evidence="9 18 19 20">
    <location>
        <position position="399"/>
    </location>
</feature>
<feature type="modified residue" description="Phosphoserine" evidence="9 12 18 19 20 21">
    <location>
        <position position="399"/>
    </location>
</feature>
<feature type="mutagenesis site" description="Does not affect nuclear localization." evidence="12">
    <original>KRK</original>
    <variation>GGG</variation>
    <location>
        <begin position="63"/>
        <end position="65"/>
    </location>
</feature>
<feature type="mutagenesis site" description="Little or no effect on S-adenosyl-L-methionine-binding or methyltransferase activity; when associated with A-192." evidence="9">
    <original>D</original>
    <variation>A</variation>
    <location>
        <position position="173"/>
    </location>
</feature>
<feature type="mutagenesis site" description="Little or no effect on methyltransferase activity. Little or no effect on S-adenosyl-L-methionine-binding or methyltransferase activity; when associated with A-173." evidence="9 10 11">
    <original>E</original>
    <variation>A</variation>
    <location>
        <position position="192"/>
    </location>
</feature>
<feature type="mutagenesis site" description="Does not affect methyltransferase activity of the heterodimer complex formed with METTL3." evidence="11">
    <original>Y</original>
    <variation>A</variation>
    <location>
        <position position="198"/>
    </location>
</feature>
<feature type="mutagenesis site" description="Reduced RNA-binding. Reduced RNA-binding; when associated with E-255." evidence="9">
    <original>R</original>
    <variation>E</variation>
    <location>
        <position position="245"/>
    </location>
</feature>
<feature type="mutagenesis site" description="Strongly reduced methyltransferase activity of the heterodimer complex formed with METTL3." evidence="11">
    <original>RR</original>
    <variation>AA</variation>
    <location>
        <begin position="254"/>
        <end position="255"/>
    </location>
</feature>
<feature type="mutagenesis site" description="Reduced RNA-binding; when associated with E-245." evidence="9">
    <original>R</original>
    <variation>E</variation>
    <location>
        <position position="255"/>
    </location>
</feature>
<feature type="mutagenesis site" description="Reduced RNA-binding." evidence="9">
    <original>KR</original>
    <variation>EE</variation>
    <location>
        <begin position="297"/>
        <end position="298"/>
    </location>
</feature>
<feature type="mutagenesis site" description="Strongly decreased methyltransferase activity of the heterodimer complex formed with METTL3, probably due to reduced RNA-binding." evidence="10">
    <original>R</original>
    <variation>P</variation>
    <location>
        <position position="298"/>
    </location>
</feature>
<feature type="mutagenesis site" description="Decreased methyltransferase activity of the heterodimer complex formed with METTL3." evidence="10">
    <original>D</original>
    <variation>A</variation>
    <location>
        <position position="312"/>
    </location>
</feature>
<feature type="mutagenesis site" description="Does not affect methyltransferase activity of the heterodimer complex formed with METTL3." evidence="11">
    <original>C</original>
    <variation>A</variation>
    <location>
        <position position="338"/>
    </location>
</feature>
<feature type="mutagenesis site" description="Little or no effect on methyltransferase activity of the heterodimer complex formed with METTL3." evidence="11">
    <original>PT</original>
    <variation>AA</variation>
    <location>
        <begin position="362"/>
        <end position="363"/>
    </location>
</feature>
<feature type="mutagenesis site" description="Does not affect interaction with METTL3." evidence="12">
    <original>S</original>
    <variation>A</variation>
    <variation>E</variation>
    <location>
        <position position="399"/>
    </location>
</feature>
<feature type="helix" evidence="22">
    <location>
        <begin position="119"/>
        <end position="126"/>
    </location>
</feature>
<feature type="helix" evidence="22">
    <location>
        <begin position="130"/>
        <end position="133"/>
    </location>
</feature>
<feature type="turn" evidence="22">
    <location>
        <begin position="140"/>
        <end position="145"/>
    </location>
</feature>
<feature type="helix" evidence="22">
    <location>
        <begin position="147"/>
        <end position="163"/>
    </location>
</feature>
<feature type="strand" evidence="22">
    <location>
        <begin position="168"/>
        <end position="171"/>
    </location>
</feature>
<feature type="turn" evidence="22">
    <location>
        <begin position="174"/>
        <end position="176"/>
    </location>
</feature>
<feature type="helix" evidence="22">
    <location>
        <begin position="179"/>
        <end position="181"/>
    </location>
</feature>
<feature type="strand" evidence="22">
    <location>
        <begin position="186"/>
        <end position="191"/>
    </location>
</feature>
<feature type="helix" evidence="22">
    <location>
        <begin position="196"/>
        <end position="200"/>
    </location>
</feature>
<feature type="helix" evidence="22">
    <location>
        <begin position="213"/>
        <end position="217"/>
    </location>
</feature>
<feature type="helix" evidence="22">
    <location>
        <begin position="221"/>
        <end position="223"/>
    </location>
</feature>
<feature type="strand" evidence="22">
    <location>
        <begin position="225"/>
        <end position="234"/>
    </location>
</feature>
<feature type="helix" evidence="22">
    <location>
        <begin position="240"/>
        <end position="251"/>
    </location>
</feature>
<feature type="strand" evidence="22">
    <location>
        <begin position="254"/>
        <end position="264"/>
    </location>
</feature>
<feature type="strand" evidence="22">
    <location>
        <begin position="266"/>
        <end position="268"/>
    </location>
</feature>
<feature type="strand" evidence="25">
    <location>
        <begin position="280"/>
        <end position="282"/>
    </location>
</feature>
<feature type="strand" evidence="22">
    <location>
        <begin position="285"/>
        <end position="294"/>
    </location>
</feature>
<feature type="turn" evidence="22">
    <location>
        <begin position="298"/>
        <end position="300"/>
    </location>
</feature>
<feature type="turn" evidence="22">
    <location>
        <begin position="302"/>
        <end position="304"/>
    </location>
</feature>
<feature type="strand" evidence="22">
    <location>
        <begin position="309"/>
        <end position="317"/>
    </location>
</feature>
<feature type="helix" evidence="22">
    <location>
        <begin position="329"/>
        <end position="337"/>
    </location>
</feature>
<feature type="strand" evidence="22">
    <location>
        <begin position="343"/>
        <end position="346"/>
    </location>
</feature>
<feature type="helix" evidence="22">
    <location>
        <begin position="350"/>
        <end position="352"/>
    </location>
</feature>
<feature type="strand" evidence="22">
    <location>
        <begin position="358"/>
        <end position="361"/>
    </location>
</feature>
<feature type="helix" evidence="22">
    <location>
        <begin position="371"/>
        <end position="376"/>
    </location>
</feature>
<feature type="strand" evidence="24">
    <location>
        <begin position="382"/>
        <end position="384"/>
    </location>
</feature>
<feature type="strand" evidence="23">
    <location>
        <begin position="387"/>
        <end position="389"/>
    </location>
</feature>
<feature type="helix" evidence="22">
    <location>
        <begin position="390"/>
        <end position="395"/>
    </location>
</feature>
<name>MET14_HUMAN</name>
<reference key="1">
    <citation type="journal article" date="2000" name="DNA Res.">
        <title>Prediction of the coding sequences of unidentified human genes. XVIII. The complete sequences of 100 new cDNA clones from brain which code for large proteins in vitro.</title>
        <authorList>
            <person name="Nagase T."/>
            <person name="Kikuno R."/>
            <person name="Nakayama M."/>
            <person name="Hirosawa M."/>
            <person name="Ohara O."/>
        </authorList>
    </citation>
    <scope>NUCLEOTIDE SEQUENCE [LARGE SCALE MRNA]</scope>
    <source>
        <tissue>Brain</tissue>
    </source>
</reference>
<reference key="2">
    <citation type="journal article" date="2002" name="DNA Res.">
        <title>Construction of expression-ready cDNA clones for KIAA genes: manual curation of 330 KIAA cDNA clones.</title>
        <authorList>
            <person name="Nakajima D."/>
            <person name="Okazaki N."/>
            <person name="Yamakawa H."/>
            <person name="Kikuno R."/>
            <person name="Ohara O."/>
            <person name="Nagase T."/>
        </authorList>
    </citation>
    <scope>SEQUENCE REVISION</scope>
</reference>
<reference key="3">
    <citation type="journal article" date="2004" name="Nat. Genet.">
        <title>Complete sequencing and characterization of 21,243 full-length human cDNAs.</title>
        <authorList>
            <person name="Ota T."/>
            <person name="Suzuki Y."/>
            <person name="Nishikawa T."/>
            <person name="Otsuki T."/>
            <person name="Sugiyama T."/>
            <person name="Irie R."/>
            <person name="Wakamatsu A."/>
            <person name="Hayashi K."/>
            <person name="Sato H."/>
            <person name="Nagai K."/>
            <person name="Kimura K."/>
            <person name="Makita H."/>
            <person name="Sekine M."/>
            <person name="Obayashi M."/>
            <person name="Nishi T."/>
            <person name="Shibahara T."/>
            <person name="Tanaka T."/>
            <person name="Ishii S."/>
            <person name="Yamamoto J."/>
            <person name="Saito K."/>
            <person name="Kawai Y."/>
            <person name="Isono Y."/>
            <person name="Nakamura Y."/>
            <person name="Nagahari K."/>
            <person name="Murakami K."/>
            <person name="Yasuda T."/>
            <person name="Iwayanagi T."/>
            <person name="Wagatsuma M."/>
            <person name="Shiratori A."/>
            <person name="Sudo H."/>
            <person name="Hosoiri T."/>
            <person name="Kaku Y."/>
            <person name="Kodaira H."/>
            <person name="Kondo H."/>
            <person name="Sugawara M."/>
            <person name="Takahashi M."/>
            <person name="Kanda K."/>
            <person name="Yokoi T."/>
            <person name="Furuya T."/>
            <person name="Kikkawa E."/>
            <person name="Omura Y."/>
            <person name="Abe K."/>
            <person name="Kamihara K."/>
            <person name="Katsuta N."/>
            <person name="Sato K."/>
            <person name="Tanikawa M."/>
            <person name="Yamazaki M."/>
            <person name="Ninomiya K."/>
            <person name="Ishibashi T."/>
            <person name="Yamashita H."/>
            <person name="Murakawa K."/>
            <person name="Fujimori K."/>
            <person name="Tanai H."/>
            <person name="Kimata M."/>
            <person name="Watanabe M."/>
            <person name="Hiraoka S."/>
            <person name="Chiba Y."/>
            <person name="Ishida S."/>
            <person name="Ono Y."/>
            <person name="Takiguchi S."/>
            <person name="Watanabe S."/>
            <person name="Yosida M."/>
            <person name="Hotuta T."/>
            <person name="Kusano J."/>
            <person name="Kanehori K."/>
            <person name="Takahashi-Fujii A."/>
            <person name="Hara H."/>
            <person name="Tanase T.-O."/>
            <person name="Nomura Y."/>
            <person name="Togiya S."/>
            <person name="Komai F."/>
            <person name="Hara R."/>
            <person name="Takeuchi K."/>
            <person name="Arita M."/>
            <person name="Imose N."/>
            <person name="Musashino K."/>
            <person name="Yuuki H."/>
            <person name="Oshima A."/>
            <person name="Sasaki N."/>
            <person name="Aotsuka S."/>
            <person name="Yoshikawa Y."/>
            <person name="Matsunawa H."/>
            <person name="Ichihara T."/>
            <person name="Shiohata N."/>
            <person name="Sano S."/>
            <person name="Moriya S."/>
            <person name="Momiyama H."/>
            <person name="Satoh N."/>
            <person name="Takami S."/>
            <person name="Terashima Y."/>
            <person name="Suzuki O."/>
            <person name="Nakagawa S."/>
            <person name="Senoh A."/>
            <person name="Mizoguchi H."/>
            <person name="Goto Y."/>
            <person name="Shimizu F."/>
            <person name="Wakebe H."/>
            <person name="Hishigaki H."/>
            <person name="Watanabe T."/>
            <person name="Sugiyama A."/>
            <person name="Takemoto M."/>
            <person name="Kawakami B."/>
            <person name="Yamazaki M."/>
            <person name="Watanabe K."/>
            <person name="Kumagai A."/>
            <person name="Itakura S."/>
            <person name="Fukuzumi Y."/>
            <person name="Fujimori Y."/>
            <person name="Komiyama M."/>
            <person name="Tashiro H."/>
            <person name="Tanigami A."/>
            <person name="Fujiwara T."/>
            <person name="Ono T."/>
            <person name="Yamada K."/>
            <person name="Fujii Y."/>
            <person name="Ozaki K."/>
            <person name="Hirao M."/>
            <person name="Ohmori Y."/>
            <person name="Kawabata A."/>
            <person name="Hikiji T."/>
            <person name="Kobatake N."/>
            <person name="Inagaki H."/>
            <person name="Ikema Y."/>
            <person name="Okamoto S."/>
            <person name="Okitani R."/>
            <person name="Kawakami T."/>
            <person name="Noguchi S."/>
            <person name="Itoh T."/>
            <person name="Shigeta K."/>
            <person name="Senba T."/>
            <person name="Matsumura K."/>
            <person name="Nakajima Y."/>
            <person name="Mizuno T."/>
            <person name="Morinaga M."/>
            <person name="Sasaki M."/>
            <person name="Togashi T."/>
            <person name="Oyama M."/>
            <person name="Hata H."/>
            <person name="Watanabe M."/>
            <person name="Komatsu T."/>
            <person name="Mizushima-Sugano J."/>
            <person name="Satoh T."/>
            <person name="Shirai Y."/>
            <person name="Takahashi Y."/>
            <person name="Nakagawa K."/>
            <person name="Okumura K."/>
            <person name="Nagase T."/>
            <person name="Nomura N."/>
            <person name="Kikuchi H."/>
            <person name="Masuho Y."/>
            <person name="Yamashita R."/>
            <person name="Nakai K."/>
            <person name="Yada T."/>
            <person name="Nakamura Y."/>
            <person name="Ohara O."/>
            <person name="Isogai T."/>
            <person name="Sugano S."/>
        </authorList>
    </citation>
    <scope>NUCLEOTIDE SEQUENCE [LARGE SCALE MRNA]</scope>
    <source>
        <tissue>Lung</tissue>
    </source>
</reference>
<reference key="4">
    <citation type="journal article" date="2005" name="Nature">
        <title>Generation and annotation of the DNA sequences of human chromosomes 2 and 4.</title>
        <authorList>
            <person name="Hillier L.W."/>
            <person name="Graves T.A."/>
            <person name="Fulton R.S."/>
            <person name="Fulton L.A."/>
            <person name="Pepin K.H."/>
            <person name="Minx P."/>
            <person name="Wagner-McPherson C."/>
            <person name="Layman D."/>
            <person name="Wylie K."/>
            <person name="Sekhon M."/>
            <person name="Becker M.C."/>
            <person name="Fewell G.A."/>
            <person name="Delehaunty K.D."/>
            <person name="Miner T.L."/>
            <person name="Nash W.E."/>
            <person name="Kremitzki C."/>
            <person name="Oddy L."/>
            <person name="Du H."/>
            <person name="Sun H."/>
            <person name="Bradshaw-Cordum H."/>
            <person name="Ali J."/>
            <person name="Carter J."/>
            <person name="Cordes M."/>
            <person name="Harris A."/>
            <person name="Isak A."/>
            <person name="van Brunt A."/>
            <person name="Nguyen C."/>
            <person name="Du F."/>
            <person name="Courtney L."/>
            <person name="Kalicki J."/>
            <person name="Ozersky P."/>
            <person name="Abbott S."/>
            <person name="Armstrong J."/>
            <person name="Belter E.A."/>
            <person name="Caruso L."/>
            <person name="Cedroni M."/>
            <person name="Cotton M."/>
            <person name="Davidson T."/>
            <person name="Desai A."/>
            <person name="Elliott G."/>
            <person name="Erb T."/>
            <person name="Fronick C."/>
            <person name="Gaige T."/>
            <person name="Haakenson W."/>
            <person name="Haglund K."/>
            <person name="Holmes A."/>
            <person name="Harkins R."/>
            <person name="Kim K."/>
            <person name="Kruchowski S.S."/>
            <person name="Strong C.M."/>
            <person name="Grewal N."/>
            <person name="Goyea E."/>
            <person name="Hou S."/>
            <person name="Levy A."/>
            <person name="Martinka S."/>
            <person name="Mead K."/>
            <person name="McLellan M.D."/>
            <person name="Meyer R."/>
            <person name="Randall-Maher J."/>
            <person name="Tomlinson C."/>
            <person name="Dauphin-Kohlberg S."/>
            <person name="Kozlowicz-Reilly A."/>
            <person name="Shah N."/>
            <person name="Swearengen-Shahid S."/>
            <person name="Snider J."/>
            <person name="Strong J.T."/>
            <person name="Thompson J."/>
            <person name="Yoakum M."/>
            <person name="Leonard S."/>
            <person name="Pearman C."/>
            <person name="Trani L."/>
            <person name="Radionenko M."/>
            <person name="Waligorski J.E."/>
            <person name="Wang C."/>
            <person name="Rock S.M."/>
            <person name="Tin-Wollam A.-M."/>
            <person name="Maupin R."/>
            <person name="Latreille P."/>
            <person name="Wendl M.C."/>
            <person name="Yang S.-P."/>
            <person name="Pohl C."/>
            <person name="Wallis J.W."/>
            <person name="Spieth J."/>
            <person name="Bieri T.A."/>
            <person name="Berkowicz N."/>
            <person name="Nelson J.O."/>
            <person name="Osborne J."/>
            <person name="Ding L."/>
            <person name="Meyer R."/>
            <person name="Sabo A."/>
            <person name="Shotland Y."/>
            <person name="Sinha P."/>
            <person name="Wohldmann P.E."/>
            <person name="Cook L.L."/>
            <person name="Hickenbotham M.T."/>
            <person name="Eldred J."/>
            <person name="Williams D."/>
            <person name="Jones T.A."/>
            <person name="She X."/>
            <person name="Ciccarelli F.D."/>
            <person name="Izaurralde E."/>
            <person name="Taylor J."/>
            <person name="Schmutz J."/>
            <person name="Myers R.M."/>
            <person name="Cox D.R."/>
            <person name="Huang X."/>
            <person name="McPherson J.D."/>
            <person name="Mardis E.R."/>
            <person name="Clifton S.W."/>
            <person name="Warren W.C."/>
            <person name="Chinwalla A.T."/>
            <person name="Eddy S.R."/>
            <person name="Marra M.A."/>
            <person name="Ovcharenko I."/>
            <person name="Furey T.S."/>
            <person name="Miller W."/>
            <person name="Eichler E.E."/>
            <person name="Bork P."/>
            <person name="Suyama M."/>
            <person name="Torrents D."/>
            <person name="Waterston R.H."/>
            <person name="Wilson R.K."/>
        </authorList>
    </citation>
    <scope>NUCLEOTIDE SEQUENCE [LARGE SCALE GENOMIC DNA]</scope>
</reference>
<reference key="5">
    <citation type="submission" date="2005-07" db="EMBL/GenBank/DDBJ databases">
        <authorList>
            <person name="Mural R.J."/>
            <person name="Istrail S."/>
            <person name="Sutton G.G."/>
            <person name="Florea L."/>
            <person name="Halpern A.L."/>
            <person name="Mobarry C.M."/>
            <person name="Lippert R."/>
            <person name="Walenz B."/>
            <person name="Shatkay H."/>
            <person name="Dew I."/>
            <person name="Miller J.R."/>
            <person name="Flanigan M.J."/>
            <person name="Edwards N.J."/>
            <person name="Bolanos R."/>
            <person name="Fasulo D."/>
            <person name="Halldorsson B.V."/>
            <person name="Hannenhalli S."/>
            <person name="Turner R."/>
            <person name="Yooseph S."/>
            <person name="Lu F."/>
            <person name="Nusskern D.R."/>
            <person name="Shue B.C."/>
            <person name="Zheng X.H."/>
            <person name="Zhong F."/>
            <person name="Delcher A.L."/>
            <person name="Huson D.H."/>
            <person name="Kravitz S.A."/>
            <person name="Mouchard L."/>
            <person name="Reinert K."/>
            <person name="Remington K.A."/>
            <person name="Clark A.G."/>
            <person name="Waterman M.S."/>
            <person name="Eichler E.E."/>
            <person name="Adams M.D."/>
            <person name="Hunkapiller M.W."/>
            <person name="Myers E.W."/>
            <person name="Venter J.C."/>
        </authorList>
    </citation>
    <scope>NUCLEOTIDE SEQUENCE [LARGE SCALE GENOMIC DNA]</scope>
</reference>
<reference key="6">
    <citation type="journal article" date="2004" name="Genome Res.">
        <title>The status, quality, and expansion of the NIH full-length cDNA project: the Mammalian Gene Collection (MGC).</title>
        <authorList>
            <consortium name="The MGC Project Team"/>
        </authorList>
    </citation>
    <scope>NUCLEOTIDE SEQUENCE [LARGE SCALE MRNA]</scope>
    <source>
        <tissue>Muscle</tissue>
    </source>
</reference>
<reference key="7">
    <citation type="journal article" date="2011" name="BMC Syst. Biol.">
        <title>Initial characterization of the human central proteome.</title>
        <authorList>
            <person name="Burkard T.R."/>
            <person name="Planyavsky M."/>
            <person name="Kaupe I."/>
            <person name="Breitwieser F.P."/>
            <person name="Buerckstuemmer T."/>
            <person name="Bennett K.L."/>
            <person name="Superti-Furga G."/>
            <person name="Colinge J."/>
        </authorList>
    </citation>
    <scope>IDENTIFICATION BY MASS SPECTROMETRY [LARGE SCALE ANALYSIS]</scope>
</reference>
<reference key="8">
    <citation type="journal article" date="2014" name="Cell Res.">
        <title>Mammalian WTAP is a regulatory subunit of the RNA N6-methyladenosine methyltransferase.</title>
        <authorList>
            <person name="Ping X.L."/>
            <person name="Sun B.F."/>
            <person name="Wang L."/>
            <person name="Xiao W."/>
            <person name="Yang X."/>
            <person name="Wang W.J."/>
            <person name="Adhikari S."/>
            <person name="Shi Y."/>
            <person name="Lv Y."/>
            <person name="Chen Y.S."/>
            <person name="Zhao X."/>
            <person name="Li A."/>
            <person name="Yang Y."/>
            <person name="Dahal U."/>
            <person name="Lou X.M."/>
            <person name="Liu X."/>
            <person name="Huang J."/>
            <person name="Yuan W.P."/>
            <person name="Zhu X.F."/>
            <person name="Cheng T."/>
            <person name="Zhao Y.L."/>
            <person name="Wang X."/>
            <person name="Danielsen J.M."/>
            <person name="Liu F."/>
            <person name="Yang Y.G."/>
        </authorList>
    </citation>
    <scope>FUNCTION</scope>
    <scope>SUBCELLULAR LOCATION</scope>
    <scope>IDENTIFICATION IN THE WMM COMPLEX</scope>
</reference>
<reference key="9">
    <citation type="journal article" date="2014" name="Cell Rep.">
        <title>Perturbation of m6A writers reveals two distinct classes of mRNA methylation at internal and 5' sites.</title>
        <authorList>
            <person name="Schwartz S."/>
            <person name="Mumbach M.R."/>
            <person name="Jovanovic M."/>
            <person name="Wang T."/>
            <person name="Maciag K."/>
            <person name="Bushkin G.G."/>
            <person name="Mertins P."/>
            <person name="Ter-Ovanesyan D."/>
            <person name="Habib N."/>
            <person name="Cacchiarelli D."/>
            <person name="Sanjana N.E."/>
            <person name="Freinkman E."/>
            <person name="Pacold M.E."/>
            <person name="Satija R."/>
            <person name="Mikkelsen T.S."/>
            <person name="Hacohen N."/>
            <person name="Zhang F."/>
            <person name="Carr S.A."/>
            <person name="Lander E.S."/>
            <person name="Regev A."/>
        </authorList>
    </citation>
    <scope>IDENTIFICATION IN THE WMM COMPLEX</scope>
</reference>
<reference key="10">
    <citation type="journal article" date="2014" name="J. Proteomics">
        <title>An enzyme assisted RP-RPLC approach for in-depth analysis of human liver phosphoproteome.</title>
        <authorList>
            <person name="Bian Y."/>
            <person name="Song C."/>
            <person name="Cheng K."/>
            <person name="Dong M."/>
            <person name="Wang F."/>
            <person name="Huang J."/>
            <person name="Sun D."/>
            <person name="Wang L."/>
            <person name="Ye M."/>
            <person name="Zou H."/>
        </authorList>
    </citation>
    <scope>PHOSPHORYLATION [LARGE SCALE ANALYSIS] AT SER-399</scope>
    <scope>IDENTIFICATION BY MASS SPECTROMETRY [LARGE SCALE ANALYSIS]</scope>
    <source>
        <tissue>Liver</tissue>
    </source>
</reference>
<reference key="11">
    <citation type="journal article" date="2014" name="Nat. Chem. Biol.">
        <title>A METTL3-METTL14 complex mediates mammalian nuclear RNA N-adenosine methylation.</title>
        <authorList>
            <person name="Liu J."/>
            <person name="Yue Y."/>
            <person name="Han D."/>
            <person name="Wang X."/>
            <person name="Fu Y."/>
            <person name="Zhang L."/>
            <person name="Jia G."/>
            <person name="Yu M."/>
            <person name="Lu Z."/>
            <person name="Deng X."/>
            <person name="Dai Q."/>
            <person name="Chen W."/>
            <person name="He C."/>
        </authorList>
    </citation>
    <scope>FUNCTION</scope>
    <scope>SUBCELLULAR LOCATION</scope>
    <scope>IDENTIFICATION IN THE WMM COMPLEX</scope>
</reference>
<reference key="12">
    <citation type="journal article" date="2015" name="Nature">
        <title>N(6)-methyladenosine-dependent RNA structural switches regulate RNA-protein interactions.</title>
        <authorList>
            <person name="Liu N."/>
            <person name="Dai Q."/>
            <person name="Zheng G."/>
            <person name="He C."/>
            <person name="Parisien M."/>
            <person name="Pan T."/>
        </authorList>
    </citation>
    <scope>FUNCTION</scope>
</reference>
<reference key="13">
    <citation type="journal article" date="2015" name="Nature">
        <title>Dynamic m(6)A mRNA methylation directs translational control of heat shock response.</title>
        <authorList>
            <person name="Zhou J."/>
            <person name="Wan J."/>
            <person name="Gao X."/>
            <person name="Zhang X."/>
            <person name="Jaffrey S.R."/>
            <person name="Qian S.B."/>
        </authorList>
    </citation>
    <scope>SUBCELLULAR LOCATION</scope>
</reference>
<reference key="14">
    <citation type="journal article" date="2018" name="Cell Discov.">
        <title>VIRMA mediates preferential m6A mRNA methylation in 3'UTR and near stop codon and associates with alternative polyadenylation.</title>
        <authorList>
            <person name="Yue Y."/>
            <person name="Liu J."/>
            <person name="Cui X."/>
            <person name="Cao J."/>
            <person name="Luo G."/>
            <person name="Zhang Z."/>
            <person name="Cheng T."/>
            <person name="Gao M."/>
            <person name="Shu X."/>
            <person name="Ma H."/>
            <person name="Wang F."/>
            <person name="Wang X."/>
            <person name="Shen B."/>
            <person name="Wang Y."/>
            <person name="Feng X."/>
            <person name="He C."/>
            <person name="Liu J."/>
        </authorList>
    </citation>
    <scope>IDENTIFICATION IN THE WMM COMPLEX</scope>
</reference>
<reference key="15">
    <citation type="journal article" date="2018" name="RNA">
        <title>Interactions, localization, and phosphorylation of the m6A generating METTL3-METTL14-WTAP complex.</title>
        <authorList>
            <person name="Schoeller E."/>
            <person name="Weichmann F."/>
            <person name="Treiber T."/>
            <person name="Ringle S."/>
            <person name="Treiber N."/>
            <person name="Flatley A."/>
            <person name="Feederle R."/>
            <person name="Bruckmann A."/>
            <person name="Meister G."/>
        </authorList>
    </citation>
    <scope>FUNCTION</scope>
    <scope>SUBCELLULAR LOCATION</scope>
    <scope>RNA-BINDING</scope>
    <scope>IDENTIFICATION IN THE WMM COMPLEX</scope>
    <scope>PHOSPHORYLATION AT SER-399</scope>
    <scope>MUTAGENESIS OF 63-LYS--LYS-65 AND SER-399</scope>
</reference>
<reference key="16">
    <citation type="journal article" date="2016" name="Elife">
        <title>Structural insights into the molecular mechanism of the m(6)A writer complex.</title>
        <authorList>
            <person name="Sledz P."/>
            <person name="Jinek M."/>
        </authorList>
    </citation>
    <scope>X-RAY CRYSTALLOGRAPHY (1.85 ANGSTROMS) OF 107-395 IN COMPLEX WITH METTL3</scope>
    <scope>FUNCTION</scope>
    <scope>SUBUNIT</scope>
    <scope>MUTAGENESIS OF GLU-192; TYR-198; 254-ARG-ARG-255; CYS-338 AND 362-PRO-THR-363</scope>
</reference>
<reference key="17">
    <citation type="journal article" date="2016" name="Mol. Cell">
        <title>Structural basis for cooperative function of Mettl3 and Mettl14 methyltransferases.</title>
        <authorList>
            <person name="Wang P."/>
            <person name="Doxtader K.A."/>
            <person name="Nam Y."/>
        </authorList>
    </citation>
    <scope>X-RAY CRYSTALLOGRAPHY (1.65 ANGSTROMS) OF 111-456 IN COMPLEX WITH METTL3</scope>
    <scope>FUNCTION</scope>
    <scope>SUBUNIT</scope>
    <scope>RNA-BINDING</scope>
    <scope>MUTAGENESIS OF GLU-192; ARG-298 AND ASP-312</scope>
</reference>
<reference key="18">
    <citation type="journal article" date="2016" name="Nature">
        <title>Structural basis of N(6)-adenosine methylation by the METTL3-METTL14 complex.</title>
        <authorList>
            <person name="Wang X."/>
            <person name="Feng J."/>
            <person name="Xue Y."/>
            <person name="Guan Z."/>
            <person name="Zhang D."/>
            <person name="Liu Z."/>
            <person name="Gong Z."/>
            <person name="Wang Q."/>
            <person name="Huang J."/>
            <person name="Tang C."/>
            <person name="Zou T."/>
            <person name="Yin P."/>
        </authorList>
    </citation>
    <scope>X-RAY CRYSTALLOGRAPHY (1.61 ANGSTROMS) OF 109-408 IN COMPLEX WITH METTL3</scope>
    <scope>FUNCTION</scope>
    <scope>SUBUNIT</scope>
    <scope>RNA-BINDING</scope>
    <scope>PHOSPHORYLATION AT SER-399</scope>
    <scope>MUTAGENESIS OF ASP-173; GLU-192; ARG-245; ARG-255 AND 297-LYS-ARG-298</scope>
</reference>
<sequence>MDSRLQEIRERQKLRRQLLAQQLGAESADSIGAVLNSKDEQREIAETRETCRASYDTSAPNAKRKYLDEGETDEDKMEEYKDELEMQQDEENLPYEEEIYKDSSTFLKGTQSLNPHNDYCQHFVDTGHRPQNFIRDVGLADRFEEYPKLRELIRLKDELIAKSNTPPMYLQADIEAFDIRELTPKFDVILLEPPLEEYYRETGITANEKCWTWDDIMKLEIDEIAAPRSFIFLWCGSGEGLDLGRVCLRKWGYRRCEDICWIKTNKNNPGKTKTLDPKAVFQRTKEHCLMGIKGTVKRSTDGDFIHANVDIDLIITEEPEIGNIEKPVEIFHIIEHFCLGRRRLHLFGRDSTIRPGWLTVGPTLTNSNYNAETYASYFSAPNSYLTGCTEEIERLRPKSPPPKSKSDRGGGAPRGGGRGGTSAGRGRERNRSNFRGERGGFRGGRGGAHRGGFPPR</sequence>
<keyword id="KW-0002">3D-structure</keyword>
<keyword id="KW-0221">Differentiation</keyword>
<keyword id="KW-0539">Nucleus</keyword>
<keyword id="KW-0597">Phosphoprotein</keyword>
<keyword id="KW-1267">Proteomics identification</keyword>
<keyword id="KW-1185">Reference proteome</keyword>
<keyword id="KW-0694">RNA-binding</keyword>
<keyword id="KW-0744">Spermatogenesis</keyword>
<gene>
    <name evidence="17" type="primary">METTL14</name>
    <name evidence="14" type="synonym">KIAA1627</name>
</gene>
<evidence type="ECO:0000250" key="1">
    <source>
        <dbReference type="UniProtKB" id="Q3UIK4"/>
    </source>
</evidence>
<evidence type="ECO:0000255" key="2">
    <source>
        <dbReference type="PROSITE-ProRule" id="PRU00489"/>
    </source>
</evidence>
<evidence type="ECO:0000256" key="3">
    <source>
        <dbReference type="SAM" id="MobiDB-lite"/>
    </source>
</evidence>
<evidence type="ECO:0000269" key="4">
    <source>
    </source>
</evidence>
<evidence type="ECO:0000269" key="5">
    <source>
    </source>
</evidence>
<evidence type="ECO:0000269" key="6">
    <source>
    </source>
</evidence>
<evidence type="ECO:0000269" key="7">
    <source>
    </source>
</evidence>
<evidence type="ECO:0000269" key="8">
    <source>
    </source>
</evidence>
<evidence type="ECO:0000269" key="9">
    <source>
    </source>
</evidence>
<evidence type="ECO:0000269" key="10">
    <source>
    </source>
</evidence>
<evidence type="ECO:0000269" key="11">
    <source>
    </source>
</evidence>
<evidence type="ECO:0000269" key="12">
    <source>
    </source>
</evidence>
<evidence type="ECO:0000269" key="13">
    <source>
    </source>
</evidence>
<evidence type="ECO:0000303" key="14">
    <source>
    </source>
</evidence>
<evidence type="ECO:0000303" key="15">
    <source>
    </source>
</evidence>
<evidence type="ECO:0000305" key="16"/>
<evidence type="ECO:0000312" key="17">
    <source>
        <dbReference type="HGNC" id="HGNC:29330"/>
    </source>
</evidence>
<evidence type="ECO:0007744" key="18">
    <source>
        <dbReference type="PDB" id="5IL0"/>
    </source>
</evidence>
<evidence type="ECO:0007744" key="19">
    <source>
        <dbReference type="PDB" id="5IL1"/>
    </source>
</evidence>
<evidence type="ECO:0007744" key="20">
    <source>
        <dbReference type="PDB" id="5IL2"/>
    </source>
</evidence>
<evidence type="ECO:0007744" key="21">
    <source>
    </source>
</evidence>
<evidence type="ECO:0007829" key="22">
    <source>
        <dbReference type="PDB" id="5IL2"/>
    </source>
</evidence>
<evidence type="ECO:0007829" key="23">
    <source>
        <dbReference type="PDB" id="5TEY"/>
    </source>
</evidence>
<evidence type="ECO:0007829" key="24">
    <source>
        <dbReference type="PDB" id="6TTP"/>
    </source>
</evidence>
<evidence type="ECO:0007829" key="25">
    <source>
        <dbReference type="PDB" id="7RX7"/>
    </source>
</evidence>
<organism>
    <name type="scientific">Homo sapiens</name>
    <name type="common">Human</name>
    <dbReference type="NCBI Taxonomy" id="9606"/>
    <lineage>
        <taxon>Eukaryota</taxon>
        <taxon>Metazoa</taxon>
        <taxon>Chordata</taxon>
        <taxon>Craniata</taxon>
        <taxon>Vertebrata</taxon>
        <taxon>Euteleostomi</taxon>
        <taxon>Mammalia</taxon>
        <taxon>Eutheria</taxon>
        <taxon>Euarchontoglires</taxon>
        <taxon>Primates</taxon>
        <taxon>Haplorrhini</taxon>
        <taxon>Catarrhini</taxon>
        <taxon>Hominidae</taxon>
        <taxon>Homo</taxon>
    </lineage>
</organism>
<proteinExistence type="evidence at protein level"/>
<dbReference type="EMBL" id="AB046847">
    <property type="protein sequence ID" value="BAB13453.1"/>
    <property type="status" value="ALT_INIT"/>
    <property type="molecule type" value="mRNA"/>
</dbReference>
<dbReference type="EMBL" id="AK055555">
    <property type="protein sequence ID" value="BAB70954.1"/>
    <property type="molecule type" value="mRNA"/>
</dbReference>
<dbReference type="EMBL" id="AC110079">
    <property type="status" value="NOT_ANNOTATED_CDS"/>
    <property type="molecule type" value="Genomic_DNA"/>
</dbReference>
<dbReference type="EMBL" id="CH471229">
    <property type="protein sequence ID" value="EAW73651.1"/>
    <property type="molecule type" value="Genomic_DNA"/>
</dbReference>
<dbReference type="EMBL" id="BC006565">
    <property type="protein sequence ID" value="AAH06565.1"/>
    <property type="molecule type" value="mRNA"/>
</dbReference>
<dbReference type="EMBL" id="BC007449">
    <property type="protein sequence ID" value="AAH07449.1"/>
    <property type="molecule type" value="mRNA"/>
</dbReference>
<dbReference type="CCDS" id="CCDS34053.1"/>
<dbReference type="RefSeq" id="NP_066012.1">
    <property type="nucleotide sequence ID" value="NM_020961.4"/>
</dbReference>
<dbReference type="PDB" id="5IL0">
    <property type="method" value="X-ray"/>
    <property type="resolution" value="1.88 A"/>
    <property type="chains" value="B=109-408"/>
</dbReference>
<dbReference type="PDB" id="5IL1">
    <property type="method" value="X-ray"/>
    <property type="resolution" value="1.71 A"/>
    <property type="chains" value="B=109-408"/>
</dbReference>
<dbReference type="PDB" id="5IL2">
    <property type="method" value="X-ray"/>
    <property type="resolution" value="1.61 A"/>
    <property type="chains" value="B=109-408"/>
</dbReference>
<dbReference type="PDB" id="5K7M">
    <property type="method" value="X-ray"/>
    <property type="resolution" value="1.65 A"/>
    <property type="chains" value="B=111-456"/>
</dbReference>
<dbReference type="PDB" id="5K7U">
    <property type="method" value="X-ray"/>
    <property type="resolution" value="1.70 A"/>
    <property type="chains" value="B=111-456"/>
</dbReference>
<dbReference type="PDB" id="5K7W">
    <property type="method" value="X-ray"/>
    <property type="resolution" value="1.65 A"/>
    <property type="chains" value="B=111-456"/>
</dbReference>
<dbReference type="PDB" id="5L6D">
    <property type="method" value="X-ray"/>
    <property type="resolution" value="1.85 A"/>
    <property type="chains" value="B=107-395"/>
</dbReference>
<dbReference type="PDB" id="5L6E">
    <property type="method" value="X-ray"/>
    <property type="resolution" value="1.90 A"/>
    <property type="chains" value="B=107-395"/>
</dbReference>
<dbReference type="PDB" id="5TEY">
    <property type="method" value="X-ray"/>
    <property type="resolution" value="1.80 A"/>
    <property type="chains" value="B=1-399"/>
</dbReference>
<dbReference type="PDB" id="6TTP">
    <property type="method" value="X-ray"/>
    <property type="resolution" value="2.00 A"/>
    <property type="chains" value="B=1-456"/>
</dbReference>
<dbReference type="PDB" id="6TTT">
    <property type="method" value="X-ray"/>
    <property type="resolution" value="2.30 A"/>
    <property type="chains" value="B=1-456"/>
</dbReference>
<dbReference type="PDB" id="6TTV">
    <property type="method" value="X-ray"/>
    <property type="resolution" value="2.14 A"/>
    <property type="chains" value="B=1-456"/>
</dbReference>
<dbReference type="PDB" id="6TTW">
    <property type="method" value="X-ray"/>
    <property type="resolution" value="2.20 A"/>
    <property type="chains" value="B=1-456"/>
</dbReference>
<dbReference type="PDB" id="6TTX">
    <property type="method" value="X-ray"/>
    <property type="resolution" value="2.00 A"/>
    <property type="chains" value="B=1-456"/>
</dbReference>
<dbReference type="PDB" id="6TU1">
    <property type="method" value="X-ray"/>
    <property type="resolution" value="2.31 A"/>
    <property type="chains" value="B=1-456"/>
</dbReference>
<dbReference type="PDB" id="6Y4G">
    <property type="method" value="X-ray"/>
    <property type="resolution" value="1.90 A"/>
    <property type="chains" value="B=1-456"/>
</dbReference>
<dbReference type="PDB" id="7ACD">
    <property type="method" value="X-ray"/>
    <property type="resolution" value="2.50 A"/>
    <property type="chains" value="B=106-395"/>
</dbReference>
<dbReference type="PDB" id="7NHG">
    <property type="method" value="X-ray"/>
    <property type="resolution" value="2.50 A"/>
    <property type="chains" value="B=106-395"/>
</dbReference>
<dbReference type="PDB" id="7NHH">
    <property type="method" value="X-ray"/>
    <property type="resolution" value="2.10 A"/>
    <property type="chains" value="B=106-395"/>
</dbReference>
<dbReference type="PDB" id="7NHI">
    <property type="method" value="X-ray"/>
    <property type="resolution" value="1.85 A"/>
    <property type="chains" value="B=106-395"/>
</dbReference>
<dbReference type="PDB" id="7NHJ">
    <property type="method" value="X-ray"/>
    <property type="resolution" value="2.16 A"/>
    <property type="chains" value="B=106-395"/>
</dbReference>
<dbReference type="PDB" id="7NHV">
    <property type="method" value="X-ray"/>
    <property type="resolution" value="1.91 A"/>
    <property type="chains" value="B=106-395"/>
</dbReference>
<dbReference type="PDB" id="7NI7">
    <property type="method" value="X-ray"/>
    <property type="resolution" value="2.50 A"/>
    <property type="chains" value="B=106-395"/>
</dbReference>
<dbReference type="PDB" id="7NI8">
    <property type="method" value="X-ray"/>
    <property type="resolution" value="2.20 A"/>
    <property type="chains" value="B=106-395"/>
</dbReference>
<dbReference type="PDB" id="7NI9">
    <property type="method" value="X-ray"/>
    <property type="resolution" value="2.20 A"/>
    <property type="chains" value="B=106-395"/>
</dbReference>
<dbReference type="PDB" id="7NIA">
    <property type="method" value="X-ray"/>
    <property type="resolution" value="2.30 A"/>
    <property type="chains" value="B=106-395"/>
</dbReference>
<dbReference type="PDB" id="7NID">
    <property type="method" value="X-ray"/>
    <property type="resolution" value="2.30 A"/>
    <property type="chains" value="B=106-395"/>
</dbReference>
<dbReference type="PDB" id="7O08">
    <property type="method" value="X-ray"/>
    <property type="resolution" value="2.00 A"/>
    <property type="chains" value="B=106-395"/>
</dbReference>
<dbReference type="PDB" id="7O09">
    <property type="method" value="X-ray"/>
    <property type="resolution" value="1.80 A"/>
    <property type="chains" value="B=106-395"/>
</dbReference>
<dbReference type="PDB" id="7O0L">
    <property type="method" value="X-ray"/>
    <property type="resolution" value="1.90 A"/>
    <property type="chains" value="B=106-395"/>
</dbReference>
<dbReference type="PDB" id="7O0M">
    <property type="method" value="X-ray"/>
    <property type="resolution" value="2.39 A"/>
    <property type="chains" value="B=106-395"/>
</dbReference>
<dbReference type="PDB" id="7O0P">
    <property type="method" value="X-ray"/>
    <property type="resolution" value="2.70 A"/>
    <property type="chains" value="B=106-395"/>
</dbReference>
<dbReference type="PDB" id="7O0Q">
    <property type="method" value="X-ray"/>
    <property type="resolution" value="2.49 A"/>
    <property type="chains" value="B=106-395"/>
</dbReference>
<dbReference type="PDB" id="7O0R">
    <property type="method" value="X-ray"/>
    <property type="resolution" value="2.30 A"/>
    <property type="chains" value="B=106-395"/>
</dbReference>
<dbReference type="PDB" id="7O27">
    <property type="method" value="X-ray"/>
    <property type="resolution" value="2.40 A"/>
    <property type="chains" value="B=106-395"/>
</dbReference>
<dbReference type="PDB" id="7O28">
    <property type="method" value="X-ray"/>
    <property type="resolution" value="2.47 A"/>
    <property type="chains" value="B=106-395"/>
</dbReference>
<dbReference type="PDB" id="7O29">
    <property type="method" value="X-ray"/>
    <property type="resolution" value="2.75 A"/>
    <property type="chains" value="B=106-395"/>
</dbReference>
<dbReference type="PDB" id="7O2E">
    <property type="method" value="X-ray"/>
    <property type="resolution" value="2.50 A"/>
    <property type="chains" value="B=106-395"/>
</dbReference>
<dbReference type="PDB" id="7O2F">
    <property type="method" value="X-ray"/>
    <property type="resolution" value="2.10 A"/>
    <property type="chains" value="B=106-395"/>
</dbReference>
<dbReference type="PDB" id="7O2H">
    <property type="method" value="X-ray"/>
    <property type="resolution" value="2.50 A"/>
    <property type="chains" value="B=106-395"/>
</dbReference>
<dbReference type="PDB" id="7O2I">
    <property type="method" value="X-ray"/>
    <property type="resolution" value="3.00 A"/>
    <property type="chains" value="B=107-395"/>
</dbReference>
<dbReference type="PDB" id="7O2X">
    <property type="method" value="X-ray"/>
    <property type="resolution" value="2.80 A"/>
    <property type="chains" value="B=106-395"/>
</dbReference>
<dbReference type="PDB" id="7OED">
    <property type="method" value="X-ray"/>
    <property type="resolution" value="2.00 A"/>
    <property type="chains" value="B=106-395"/>
</dbReference>
<dbReference type="PDB" id="7OEE">
    <property type="method" value="X-ray"/>
    <property type="resolution" value="2.70 A"/>
    <property type="chains" value="B=106-395"/>
</dbReference>
<dbReference type="PDB" id="7OEF">
    <property type="method" value="X-ray"/>
    <property type="resolution" value="2.03 A"/>
    <property type="chains" value="B=106-395"/>
</dbReference>
<dbReference type="PDB" id="7OEG">
    <property type="method" value="X-ray"/>
    <property type="resolution" value="2.79 A"/>
    <property type="chains" value="B=106-395"/>
</dbReference>
<dbReference type="PDB" id="7OEH">
    <property type="method" value="X-ray"/>
    <property type="resolution" value="2.01 A"/>
    <property type="chains" value="B=106-395"/>
</dbReference>
<dbReference type="PDB" id="7OEI">
    <property type="method" value="X-ray"/>
    <property type="resolution" value="2.48 A"/>
    <property type="chains" value="B=106-395"/>
</dbReference>
<dbReference type="PDB" id="7OEJ">
    <property type="method" value="X-ray"/>
    <property type="resolution" value="2.30 A"/>
    <property type="chains" value="B=106-395"/>
</dbReference>
<dbReference type="PDB" id="7OEK">
    <property type="method" value="X-ray"/>
    <property type="resolution" value="1.90 A"/>
    <property type="chains" value="B=106-395"/>
</dbReference>
<dbReference type="PDB" id="7OEL">
    <property type="method" value="X-ray"/>
    <property type="resolution" value="1.86 A"/>
    <property type="chains" value="B=106-395"/>
</dbReference>
<dbReference type="PDB" id="7OEM">
    <property type="method" value="X-ray"/>
    <property type="resolution" value="2.20 A"/>
    <property type="chains" value="B=106-395"/>
</dbReference>
<dbReference type="PDB" id="7OQL">
    <property type="method" value="X-ray"/>
    <property type="resolution" value="2.50 A"/>
    <property type="chains" value="B=106-395"/>
</dbReference>
<dbReference type="PDB" id="7OQO">
    <property type="method" value="X-ray"/>
    <property type="resolution" value="3.35 A"/>
    <property type="chains" value="B=106-395"/>
</dbReference>
<dbReference type="PDB" id="7OQP">
    <property type="method" value="X-ray"/>
    <property type="resolution" value="2.00 A"/>
    <property type="chains" value="B=106-395"/>
</dbReference>
<dbReference type="PDB" id="7RX6">
    <property type="method" value="X-ray"/>
    <property type="resolution" value="1.80 A"/>
    <property type="chains" value="B=111-456"/>
</dbReference>
<dbReference type="PDB" id="7RX7">
    <property type="method" value="X-ray"/>
    <property type="resolution" value="1.65 A"/>
    <property type="chains" value="B=111-456"/>
</dbReference>
<dbReference type="PDB" id="7RX8">
    <property type="method" value="X-ray"/>
    <property type="resolution" value="1.85 A"/>
    <property type="chains" value="B=111-456"/>
</dbReference>
<dbReference type="PDB" id="8BN8">
    <property type="method" value="X-ray"/>
    <property type="resolution" value="2.21 A"/>
    <property type="chains" value="BBB=107-395"/>
</dbReference>
<dbReference type="PDB" id="9G4S">
    <property type="method" value="X-ray"/>
    <property type="resolution" value="1.95 A"/>
    <property type="chains" value="B=116-395"/>
</dbReference>
<dbReference type="PDB" id="9G4U">
    <property type="method" value="X-ray"/>
    <property type="resolution" value="2.00 A"/>
    <property type="chains" value="B=117-395"/>
</dbReference>
<dbReference type="PDB" id="9G4W">
    <property type="method" value="X-ray"/>
    <property type="resolution" value="1.85 A"/>
    <property type="chains" value="B=117-395"/>
</dbReference>
<dbReference type="PDBsum" id="5IL0"/>
<dbReference type="PDBsum" id="5IL1"/>
<dbReference type="PDBsum" id="5IL2"/>
<dbReference type="PDBsum" id="5K7M"/>
<dbReference type="PDBsum" id="5K7U"/>
<dbReference type="PDBsum" id="5K7W"/>
<dbReference type="PDBsum" id="5L6D"/>
<dbReference type="PDBsum" id="5L6E"/>
<dbReference type="PDBsum" id="5TEY"/>
<dbReference type="PDBsum" id="6TTP"/>
<dbReference type="PDBsum" id="6TTT"/>
<dbReference type="PDBsum" id="6TTV"/>
<dbReference type="PDBsum" id="6TTW"/>
<dbReference type="PDBsum" id="6TTX"/>
<dbReference type="PDBsum" id="6TU1"/>
<dbReference type="PDBsum" id="6Y4G"/>
<dbReference type="PDBsum" id="7ACD"/>
<dbReference type="PDBsum" id="7NHG"/>
<dbReference type="PDBsum" id="7NHH"/>
<dbReference type="PDBsum" id="7NHI"/>
<dbReference type="PDBsum" id="7NHJ"/>
<dbReference type="PDBsum" id="7NHV"/>
<dbReference type="PDBsum" id="7NI7"/>
<dbReference type="PDBsum" id="7NI8"/>
<dbReference type="PDBsum" id="7NI9"/>
<dbReference type="PDBsum" id="7NIA"/>
<dbReference type="PDBsum" id="7NID"/>
<dbReference type="PDBsum" id="7O08"/>
<dbReference type="PDBsum" id="7O09"/>
<dbReference type="PDBsum" id="7O0L"/>
<dbReference type="PDBsum" id="7O0M"/>
<dbReference type="PDBsum" id="7O0P"/>
<dbReference type="PDBsum" id="7O0Q"/>
<dbReference type="PDBsum" id="7O0R"/>
<dbReference type="PDBsum" id="7O27"/>
<dbReference type="PDBsum" id="7O28"/>
<dbReference type="PDBsum" id="7O29"/>
<dbReference type="PDBsum" id="7O2E"/>
<dbReference type="PDBsum" id="7O2F"/>
<dbReference type="PDBsum" id="7O2H"/>
<dbReference type="PDBsum" id="7O2I"/>
<dbReference type="PDBsum" id="7O2X"/>
<dbReference type="PDBsum" id="7OED"/>
<dbReference type="PDBsum" id="7OEE"/>
<dbReference type="PDBsum" id="7OEF"/>
<dbReference type="PDBsum" id="7OEG"/>
<dbReference type="PDBsum" id="7OEH"/>
<dbReference type="PDBsum" id="7OEI"/>
<dbReference type="PDBsum" id="7OEJ"/>
<dbReference type="PDBsum" id="7OEK"/>
<dbReference type="PDBsum" id="7OEL"/>
<dbReference type="PDBsum" id="7OEM"/>
<dbReference type="PDBsum" id="7OQL"/>
<dbReference type="PDBsum" id="7OQO"/>
<dbReference type="PDBsum" id="7OQP"/>
<dbReference type="PDBsum" id="7RX6"/>
<dbReference type="PDBsum" id="7RX7"/>
<dbReference type="PDBsum" id="7RX8"/>
<dbReference type="PDBsum" id="8BN8"/>
<dbReference type="PDBsum" id="9G4S"/>
<dbReference type="PDBsum" id="9G4U"/>
<dbReference type="PDBsum" id="9G4W"/>
<dbReference type="SMR" id="Q9HCE5"/>
<dbReference type="BioGRID" id="121744">
    <property type="interactions" value="564"/>
</dbReference>
<dbReference type="ComplexPortal" id="CPX-21210">
    <property type="entry name" value="Methyltransferase complex, METTL3-METTL14"/>
</dbReference>
<dbReference type="CORUM" id="Q9HCE5"/>
<dbReference type="DIP" id="DIP-60726N"/>
<dbReference type="FunCoup" id="Q9HCE5">
    <property type="interactions" value="3044"/>
</dbReference>
<dbReference type="IntAct" id="Q9HCE5">
    <property type="interactions" value="339"/>
</dbReference>
<dbReference type="MINT" id="Q9HCE5"/>
<dbReference type="STRING" id="9606.ENSP00000373474"/>
<dbReference type="BindingDB" id="Q9HCE5"/>
<dbReference type="ChEMBL" id="CHEMBL4106140"/>
<dbReference type="iPTMnet" id="Q9HCE5"/>
<dbReference type="PhosphoSitePlus" id="Q9HCE5"/>
<dbReference type="BioMuta" id="METTL14"/>
<dbReference type="DMDM" id="172045930"/>
<dbReference type="jPOST" id="Q9HCE5"/>
<dbReference type="MassIVE" id="Q9HCE5"/>
<dbReference type="PaxDb" id="9606-ENSP00000373474"/>
<dbReference type="PeptideAtlas" id="Q9HCE5"/>
<dbReference type="ProteomicsDB" id="81687"/>
<dbReference type="Pumba" id="Q9HCE5"/>
<dbReference type="Antibodypedia" id="26610">
    <property type="antibodies" value="131 antibodies from 23 providers"/>
</dbReference>
<dbReference type="DNASU" id="57721"/>
<dbReference type="Ensembl" id="ENST00000388822.10">
    <property type="protein sequence ID" value="ENSP00000373474.3"/>
    <property type="gene ID" value="ENSG00000145388.15"/>
</dbReference>
<dbReference type="GeneID" id="57721"/>
<dbReference type="KEGG" id="hsa:57721"/>
<dbReference type="MANE-Select" id="ENST00000388822.10">
    <property type="protein sequence ID" value="ENSP00000373474.3"/>
    <property type="RefSeq nucleotide sequence ID" value="NM_020961.4"/>
    <property type="RefSeq protein sequence ID" value="NP_066012.1"/>
</dbReference>
<dbReference type="UCSC" id="uc003icf.4">
    <property type="organism name" value="human"/>
</dbReference>
<dbReference type="AGR" id="HGNC:29330"/>
<dbReference type="CTD" id="57721"/>
<dbReference type="DisGeNET" id="57721"/>
<dbReference type="GeneCards" id="METTL14"/>
<dbReference type="HGNC" id="HGNC:29330">
    <property type="gene designation" value="METTL14"/>
</dbReference>
<dbReference type="HPA" id="ENSG00000145388">
    <property type="expression patterns" value="Low tissue specificity"/>
</dbReference>
<dbReference type="MIM" id="616504">
    <property type="type" value="gene"/>
</dbReference>
<dbReference type="neXtProt" id="NX_Q9HCE5"/>
<dbReference type="OpenTargets" id="ENSG00000145388"/>
<dbReference type="PharmGKB" id="PA164722277"/>
<dbReference type="VEuPathDB" id="HostDB:ENSG00000145388"/>
<dbReference type="eggNOG" id="KOG2097">
    <property type="taxonomic scope" value="Eukaryota"/>
</dbReference>
<dbReference type="GeneTree" id="ENSGT00550000075003"/>
<dbReference type="HOGENOM" id="CLU_046318_1_0_1"/>
<dbReference type="InParanoid" id="Q9HCE5"/>
<dbReference type="OMA" id="FNSELYQ"/>
<dbReference type="OrthoDB" id="14833at2759"/>
<dbReference type="PAN-GO" id="Q9HCE5">
    <property type="GO annotations" value="4 GO annotations based on evolutionary models"/>
</dbReference>
<dbReference type="PhylomeDB" id="Q9HCE5"/>
<dbReference type="TreeFam" id="TF323641"/>
<dbReference type="BRENDA" id="2.1.1.348">
    <property type="organism ID" value="2681"/>
</dbReference>
<dbReference type="PathwayCommons" id="Q9HCE5"/>
<dbReference type="Reactome" id="R-HSA-72203">
    <property type="pathway name" value="Processing of Capped Intron-Containing Pre-mRNA"/>
</dbReference>
<dbReference type="SignaLink" id="Q9HCE5"/>
<dbReference type="BioGRID-ORCS" id="57721">
    <property type="hits" value="661 hits in 1193 CRISPR screens"/>
</dbReference>
<dbReference type="ChiTaRS" id="METTL14">
    <property type="organism name" value="human"/>
</dbReference>
<dbReference type="EvolutionaryTrace" id="Q9HCE5"/>
<dbReference type="GenomeRNAi" id="57721"/>
<dbReference type="Pharos" id="Q9HCE5">
    <property type="development level" value="Tbio"/>
</dbReference>
<dbReference type="PRO" id="PR:Q9HCE5"/>
<dbReference type="Proteomes" id="UP000005640">
    <property type="component" value="Chromosome 4"/>
</dbReference>
<dbReference type="RNAct" id="Q9HCE5">
    <property type="molecule type" value="protein"/>
</dbReference>
<dbReference type="Bgee" id="ENSG00000145388">
    <property type="expression patterns" value="Expressed in calcaneal tendon and 196 other cell types or tissues"/>
</dbReference>
<dbReference type="ExpressionAtlas" id="Q9HCE5">
    <property type="expression patterns" value="baseline and differential"/>
</dbReference>
<dbReference type="GO" id="GO:0005654">
    <property type="term" value="C:nucleoplasm"/>
    <property type="evidence" value="ECO:0000314"/>
    <property type="project" value="HPA"/>
</dbReference>
<dbReference type="GO" id="GO:0005634">
    <property type="term" value="C:nucleus"/>
    <property type="evidence" value="ECO:0000314"/>
    <property type="project" value="UniProtKB"/>
</dbReference>
<dbReference type="GO" id="GO:0036396">
    <property type="term" value="C:RNA N6-methyladenosine methyltransferase complex"/>
    <property type="evidence" value="ECO:0000314"/>
    <property type="project" value="UniProtKB"/>
</dbReference>
<dbReference type="GO" id="GO:0003729">
    <property type="term" value="F:mRNA binding"/>
    <property type="evidence" value="ECO:0000314"/>
    <property type="project" value="UniProtKB"/>
</dbReference>
<dbReference type="GO" id="GO:0001734">
    <property type="term" value="F:mRNA m(6)A methyltransferase activity"/>
    <property type="evidence" value="ECO:0000314"/>
    <property type="project" value="UniProtKB"/>
</dbReference>
<dbReference type="GO" id="GO:0021861">
    <property type="term" value="P:forebrain radial glial cell differentiation"/>
    <property type="evidence" value="ECO:0000250"/>
    <property type="project" value="UniProtKB"/>
</dbReference>
<dbReference type="GO" id="GO:0042063">
    <property type="term" value="P:gliogenesis"/>
    <property type="evidence" value="ECO:0000250"/>
    <property type="project" value="UniProtKB"/>
</dbReference>
<dbReference type="GO" id="GO:0061157">
    <property type="term" value="P:mRNA destabilization"/>
    <property type="evidence" value="ECO:0000250"/>
    <property type="project" value="UniProtKB"/>
</dbReference>
<dbReference type="GO" id="GO:0016556">
    <property type="term" value="P:mRNA modification"/>
    <property type="evidence" value="ECO:0000314"/>
    <property type="project" value="UniProt"/>
</dbReference>
<dbReference type="GO" id="GO:0006397">
    <property type="term" value="P:mRNA processing"/>
    <property type="evidence" value="ECO:0000314"/>
    <property type="project" value="UniProtKB"/>
</dbReference>
<dbReference type="GO" id="GO:0000398">
    <property type="term" value="P:mRNA splicing, via spliceosome"/>
    <property type="evidence" value="ECO:0000315"/>
    <property type="project" value="UniProtKB"/>
</dbReference>
<dbReference type="GO" id="GO:0048255">
    <property type="term" value="P:mRNA stabilization"/>
    <property type="evidence" value="ECO:0000314"/>
    <property type="project" value="ARUK-UCL"/>
</dbReference>
<dbReference type="GO" id="GO:1901533">
    <property type="term" value="P:negative regulation of hematopoietic progenitor cell differentiation"/>
    <property type="evidence" value="ECO:0000315"/>
    <property type="project" value="ARUK-UCL"/>
</dbReference>
<dbReference type="GO" id="GO:0045727">
    <property type="term" value="P:positive regulation of translation"/>
    <property type="evidence" value="ECO:0000315"/>
    <property type="project" value="ARUK-UCL"/>
</dbReference>
<dbReference type="GO" id="GO:0045664">
    <property type="term" value="P:regulation of neuron differentiation"/>
    <property type="evidence" value="ECO:0007669"/>
    <property type="project" value="Ensembl"/>
</dbReference>
<dbReference type="GO" id="GO:0031667">
    <property type="term" value="P:response to nutrient levels"/>
    <property type="evidence" value="ECO:0007669"/>
    <property type="project" value="Ensembl"/>
</dbReference>
<dbReference type="GO" id="GO:0001510">
    <property type="term" value="P:RNA methylation"/>
    <property type="evidence" value="ECO:0007669"/>
    <property type="project" value="Ensembl"/>
</dbReference>
<dbReference type="GO" id="GO:0007283">
    <property type="term" value="P:spermatogenesis"/>
    <property type="evidence" value="ECO:0000250"/>
    <property type="project" value="UniProtKB"/>
</dbReference>
<dbReference type="GO" id="GO:0019827">
    <property type="term" value="P:stem cell population maintenance"/>
    <property type="evidence" value="ECO:0000250"/>
    <property type="project" value="UniProtKB"/>
</dbReference>
<dbReference type="InterPro" id="IPR045123">
    <property type="entry name" value="METTL14-like"/>
</dbReference>
<dbReference type="InterPro" id="IPR007757">
    <property type="entry name" value="MT-A70-like"/>
</dbReference>
<dbReference type="InterPro" id="IPR029063">
    <property type="entry name" value="SAM-dependent_MTases_sf"/>
</dbReference>
<dbReference type="PANTHER" id="PTHR13107">
    <property type="entry name" value="N6-ADENOSINE-METHYLTRANSFERASE NON-CATALYTIC SUBUNIT"/>
    <property type="match status" value="1"/>
</dbReference>
<dbReference type="PANTHER" id="PTHR13107:SF0">
    <property type="entry name" value="N6-ADENOSINE-METHYLTRANSFERASE NON-CATALYTIC SUBUNIT"/>
    <property type="match status" value="1"/>
</dbReference>
<dbReference type="Pfam" id="PF05063">
    <property type="entry name" value="MT-A70"/>
    <property type="match status" value="1"/>
</dbReference>
<dbReference type="SUPFAM" id="SSF53335">
    <property type="entry name" value="S-adenosyl-L-methionine-dependent methyltransferases"/>
    <property type="match status" value="1"/>
</dbReference>
<dbReference type="PROSITE" id="PS51143">
    <property type="entry name" value="MT_A70"/>
    <property type="match status" value="1"/>
</dbReference>
<dbReference type="PROSITE" id="PS51592">
    <property type="entry name" value="SAM_MTA70L_2"/>
    <property type="match status" value="1"/>
</dbReference>
<protein>
    <recommendedName>
        <fullName evidence="16">N(6)-adenosine-methyltransferase non-catalytic subunit METTL14</fullName>
    </recommendedName>
    <alternativeName>
        <fullName evidence="17">Methyltransferase-like protein 14</fullName>
        <shortName evidence="15">hMETTL14</shortName>
    </alternativeName>
</protein>
<comment type="function">
    <text evidence="1 4 5 7 9 10 11 12">The METTL3-METTL14 heterodimer forms a N6-methyltransferase complex that methylates adenosine residues at the N(6) position of some mRNAs and regulates the circadian clock, differentiation of embryonic stem cells and cortical neurogenesis (PubMed:24316715, PubMed:24407421, PubMed:25719671, PubMed:27281194, PubMed:27373337, PubMed:29348140). In the heterodimer formed with METTL3, METTL14 constitutes the RNA-binding scaffold that recognizes the substrate rather than the catalytic core (PubMed:27281194, PubMed:27373337, PubMed:27627798, PubMed:29348140). N6-methyladenosine (m6A), which takes place at the 5'-[AG]GAC-3' consensus sites of some mRNAs, plays a role in mRNA stability and processing (PubMed:24316715, PubMed:24407421, PubMed:25719671). M6A acts as a key regulator of mRNA stability by promoting mRNA destabilization and degradation (By similarity). In embryonic stem cells (ESCs), m6A methylation of mRNAs encoding key naive pluripotency-promoting transcripts results in transcript destabilization (By similarity). M6A regulates spermatogonial differentiation and meiosis and is essential for male fertility and spermatogenesis (By similarity). M6A also regulates cortical neurogenesis: m6A methylation of transcripts related to transcription factors, neural stem cells, the cell cycle and neuronal differentiation during brain development promotes their destabilization and decay, promoting differentiation of radial glial cells (By similarity).</text>
</comment>
<comment type="subunit">
    <text evidence="4 5 6 9 10 11 12 13">Heterodimer; heterodimerizes with METTL3 to form an antiparallel heterodimer that constitutes an active methyltransferase (PubMed:27281194, PubMed:27373337, PubMed:27627798). Component of the WMM complex, a N6-methyltransferase complex composed of a catalytic subcomplex, named MAC, and of an associated subcomplex, named MACOM (PubMed:24316715, PubMed:24407421, PubMed:24981863, PubMed:29348140, PubMed:29507755). The MAC subcomplex is composed of METTL3 and METTL14 (PubMed:24316715, PubMed:24407421, PubMed:24981863, PubMed:29507755). The MACOM subcomplex is composed of WTAP, ZC3H13, CBLL1/HAKAI, VIRMA, and, in some cases of RBM15 (RBM15 or RBM15B) (PubMed:29507755).</text>
</comment>
<comment type="interaction">
    <interactant intactId="EBI-6661081">
        <id>Q9HCE5</id>
    </interactant>
    <interactant intactId="EBI-11105430">
        <id>Q86U44</id>
        <label>METTL3</label>
    </interactant>
    <organismsDiffer>false</organismsDiffer>
    <experiments>21</experiments>
</comment>
<comment type="interaction">
    <interactant intactId="EBI-6661081">
        <id>Q9HCE5</id>
    </interactant>
    <interactant intactId="EBI-16084936">
        <id>Q86U44-1</id>
        <label>METTL3</label>
    </interactant>
    <organismsDiffer>false</organismsDiffer>
    <experiments>10</experiments>
</comment>
<comment type="interaction">
    <interactant intactId="EBI-6661081">
        <id>Q9HCE5</id>
    </interactant>
    <interactant intactId="EBI-16084961">
        <id>Q15007-1</id>
        <label>WTAP</label>
    </interactant>
    <organismsDiffer>false</organismsDiffer>
    <experiments>5</experiments>
</comment>
<comment type="subcellular location">
    <subcellularLocation>
        <location evidence="4 5 8 12">Nucleus</location>
    </subcellularLocation>
</comment>
<comment type="similarity">
    <text evidence="2">Belongs to the MT-A70-like family.</text>
</comment>
<comment type="caution">
    <text evidence="9 12">The effect of phosphorylation at Ser-399 is unclear. According to a report, phosphorylation at Ser-399 is important for interaction with METTL3: phosphorylated Ser-399 forms a salt bridge with 'Arg-471' of METTL3 (PubMed:27281194). According to another report, phosphorylation at Ser-399 does not affect interaction with METTL3 (PubMed:29348140).</text>
</comment>
<comment type="caution">
    <text evidence="4 9 10 11">The ability of METTL14 to have catalytic activity is unclear and a number of experimental evidence suggests that it has no methyltransferase activity by itself (PubMed:27281194, PubMed:27373337, PubMed:27627798). According to some reports, has some methyltransferase activity in vitro (PubMed:24316715). However, other studies showed that METTL14 constitutes the RNA-binding scaffold that recognizes the substrate rather than the catalytic core (PubMed:27281194, PubMed:27373337, PubMed:27627798). 3D-structure studies showed that METTL14 contains a degenerate active site that is unable to accommodate donor and acceptor substrates (PubMed:27627798).</text>
</comment>
<comment type="caution">
    <text evidence="11">A disulfide bond between Cys-338 and Cys-388 is observed in a structure (PubMed:27627798). Its existence is however unsure in vivo.</text>
</comment>
<comment type="sequence caution" evidence="16">
    <conflict type="erroneous initiation">
        <sequence resource="EMBL-CDS" id="BAB13453"/>
    </conflict>
</comment>
<accession>Q9HCE5</accession>
<accession>A6NIG1</accession>
<accession>Q969V2</accession>